<organism>
    <name type="scientific">Stachybotrys chartarum</name>
    <name type="common">Toxic black mold</name>
    <name type="synonym">Stilbospora chartarum</name>
    <dbReference type="NCBI Taxonomy" id="74722"/>
    <lineage>
        <taxon>Eukaryota</taxon>
        <taxon>Fungi</taxon>
        <taxon>Dikarya</taxon>
        <taxon>Ascomycota</taxon>
        <taxon>Pezizomycotina</taxon>
        <taxon>Sordariomycetes</taxon>
        <taxon>Hypocreomycetidae</taxon>
        <taxon>Hypocreales</taxon>
        <taxon>Stachybotryaceae</taxon>
        <taxon>Stachybotrys</taxon>
    </lineage>
</organism>
<comment type="function">
    <text>TS is a member of the terpene cyclase group of enzymes. It catalyzes the isomerization and cyclization of farnesyl pyro-phosphate to form trichodiene, the first cyclic intermediate in the biosynthetic pathway for trichothecenes. It serves to branch trichothecene biosynthesis from the isoprenoid pathway.</text>
</comment>
<comment type="catalytic activity">
    <reaction>
        <text>(2E,6E)-farnesyl diphosphate = trichodiene + diphosphate</text>
        <dbReference type="Rhea" id="RHEA:12052"/>
        <dbReference type="ChEBI" id="CHEBI:15861"/>
        <dbReference type="ChEBI" id="CHEBI:33019"/>
        <dbReference type="ChEBI" id="CHEBI:175763"/>
        <dbReference type="EC" id="4.2.3.6"/>
    </reaction>
</comment>
<comment type="pathway">
    <text>Sesquiterpene biosynthesis; trichothecene biosynthesis.</text>
</comment>
<comment type="miscellaneous">
    <text>Trichothecenes are sesquiterpenoid toxins that act by inhibiting protein biosynthesis.</text>
</comment>
<comment type="similarity">
    <text evidence="1">Belongs to the trichodiene synthase family.</text>
</comment>
<accession>O59947</accession>
<keyword id="KW-0456">Lyase</keyword>
<gene>
    <name type="primary">TRI5</name>
</gene>
<reference key="1">
    <citation type="submission" date="1998-03" db="EMBL/GenBank/DDBJ databases">
        <authorList>
            <person name="Straus N.A."/>
            <person name="Wong B."/>
        </authorList>
    </citation>
    <scope>NUCLEOTIDE SEQUENCE [GENOMIC DNA]</scope>
</reference>
<dbReference type="EC" id="4.2.3.6"/>
<dbReference type="EMBL" id="AF053926">
    <property type="protein sequence ID" value="AAC12640.1"/>
    <property type="molecule type" value="Genomic_DNA"/>
</dbReference>
<dbReference type="SMR" id="O59947"/>
<dbReference type="VEuPathDB" id="FungiDB:S40293_09639"/>
<dbReference type="UniPathway" id="UPA00267"/>
<dbReference type="GO" id="GO:0045482">
    <property type="term" value="F:trichodiene synthase activity"/>
    <property type="evidence" value="ECO:0007669"/>
    <property type="project" value="UniProtKB-EC"/>
</dbReference>
<dbReference type="GO" id="GO:0016106">
    <property type="term" value="P:sesquiterpenoid biosynthetic process"/>
    <property type="evidence" value="ECO:0007669"/>
    <property type="project" value="InterPro"/>
</dbReference>
<dbReference type="Gene3D" id="1.10.600.10">
    <property type="entry name" value="Farnesyl Diphosphate Synthase"/>
    <property type="match status" value="1"/>
</dbReference>
<dbReference type="InterPro" id="IPR008949">
    <property type="entry name" value="Isoprenoid_synthase_dom_sf"/>
</dbReference>
<dbReference type="InterPro" id="IPR010458">
    <property type="entry name" value="TRI5_ascomyc"/>
</dbReference>
<dbReference type="InterPro" id="IPR024652">
    <property type="entry name" value="Trichodiene_synth"/>
</dbReference>
<dbReference type="Pfam" id="PF06330">
    <property type="entry name" value="TRI5"/>
    <property type="match status" value="1"/>
</dbReference>
<dbReference type="PIRSF" id="PIRSF001388">
    <property type="entry name" value="TRI5"/>
    <property type="match status" value="1"/>
</dbReference>
<dbReference type="SFLD" id="SFLDS00005">
    <property type="entry name" value="Isoprenoid_Synthase_Type_I"/>
    <property type="match status" value="1"/>
</dbReference>
<dbReference type="SFLD" id="SFLDG01021">
    <property type="entry name" value="Trichodiene_Synthase_Like"/>
    <property type="match status" value="1"/>
</dbReference>
<dbReference type="SUPFAM" id="SSF48576">
    <property type="entry name" value="Terpenoid synthases"/>
    <property type="match status" value="1"/>
</dbReference>
<name>TRI5_STACH</name>
<protein>
    <recommendedName>
        <fullName>Trichodiene synthase</fullName>
        <ecNumber>4.2.3.6</ecNumber>
    </recommendedName>
    <alternativeName>
        <fullName>Sesquiterpene cyclase</fullName>
        <shortName>TS</shortName>
    </alternativeName>
</protein>
<sequence>MEAFPTEYFLGTAVRLLENVKYRDSNYTREERVENLQYAYNKAAAHFAQERQQQILKVSPKRLEASLRTIVGMVVYSWAKVSKELMADLSIHYTYTLILDDSEDDPHPQMLTYFDDLQSGNPQKHPWWMLVNEHFPNVLRHFGPFCSLNLIRSTLDFFEGCWIEQYNFHGFPGSFDYPGFLRRMNGLGHCVGGSLWPKENFNEQEHFLEITSAIAQMENWMVWVNDLMSFYKEFDDPRDQTSLVKNYVVSEGITLNQALEKLTQDTLQSSEQMMVVFSQKDPKIMDTIECFMHGYITWHLCDNRYRLKEIYDRTKDIQTEDAMKFRKFYEQAFKVGAIEATEWAYPTVVERLEQRKAEEQAERDEQAALANPEKAQVAQVVLA</sequence>
<proteinExistence type="inferred from homology"/>
<evidence type="ECO:0000305" key="1"/>
<feature type="chain" id="PRO_0000221588" description="Trichodiene synthase">
    <location>
        <begin position="1"/>
        <end position="383"/>
    </location>
</feature>